<feature type="chain" id="PRO_0000131213" description="Large ribosomal subunit protein uL18">
    <location>
        <begin position="1"/>
        <end position="120"/>
    </location>
</feature>
<organism>
    <name type="scientific">Bacillus licheniformis (strain ATCC 14580 / DSM 13 / JCM 2505 / CCUG 7422 / NBRC 12200 / NCIMB 9375 / NCTC 10341 / NRRL NRS-1264 / Gibson 46)</name>
    <dbReference type="NCBI Taxonomy" id="279010"/>
    <lineage>
        <taxon>Bacteria</taxon>
        <taxon>Bacillati</taxon>
        <taxon>Bacillota</taxon>
        <taxon>Bacilli</taxon>
        <taxon>Bacillales</taxon>
        <taxon>Bacillaceae</taxon>
        <taxon>Bacillus</taxon>
    </lineage>
</organism>
<accession>Q65P91</accession>
<accession>Q62ZN0</accession>
<comment type="function">
    <text evidence="1">This is one of the proteins that bind and probably mediate the attachment of the 5S RNA into the large ribosomal subunit, where it forms part of the central protuberance.</text>
</comment>
<comment type="subunit">
    <text evidence="1">Part of the 50S ribosomal subunit; part of the 5S rRNA/L5/L18/L25 subcomplex. Contacts the 5S and 23S rRNAs.</text>
</comment>
<comment type="similarity">
    <text evidence="1">Belongs to the universal ribosomal protein uL18 family.</text>
</comment>
<reference key="1">
    <citation type="journal article" date="2004" name="J. Mol. Microbiol. Biotechnol.">
        <title>The complete genome sequence of Bacillus licheniformis DSM13, an organism with great industrial potential.</title>
        <authorList>
            <person name="Veith B."/>
            <person name="Herzberg C."/>
            <person name="Steckel S."/>
            <person name="Feesche J."/>
            <person name="Maurer K.H."/>
            <person name="Ehrenreich P."/>
            <person name="Baeumer S."/>
            <person name="Henne A."/>
            <person name="Liesegang H."/>
            <person name="Merkl R."/>
            <person name="Ehrenreich A."/>
            <person name="Gottschalk G."/>
        </authorList>
    </citation>
    <scope>NUCLEOTIDE SEQUENCE [LARGE SCALE GENOMIC DNA]</scope>
    <source>
        <strain>ATCC 14580 / DSM 13 / JCM 2505 / CCUG 7422 / NBRC 12200 / NCIMB 9375 / NCTC 10341 / NRRL NRS-1264 / Gibson 46</strain>
    </source>
</reference>
<reference key="2">
    <citation type="journal article" date="2004" name="Genome Biol.">
        <title>Complete genome sequence of the industrial bacterium Bacillus licheniformis and comparisons with closely related Bacillus species.</title>
        <authorList>
            <person name="Rey M.W."/>
            <person name="Ramaiya P."/>
            <person name="Nelson B.A."/>
            <person name="Brody-Karpin S.D."/>
            <person name="Zaretsky E.J."/>
            <person name="Tang M."/>
            <person name="Lopez de Leon A."/>
            <person name="Xiang H."/>
            <person name="Gusti V."/>
            <person name="Clausen I.G."/>
            <person name="Olsen P.B."/>
            <person name="Rasmussen M.D."/>
            <person name="Andersen J.T."/>
            <person name="Joergensen P.L."/>
            <person name="Larsen T.S."/>
            <person name="Sorokin A."/>
            <person name="Bolotin A."/>
            <person name="Lapidus A."/>
            <person name="Galleron N."/>
            <person name="Ehrlich S.D."/>
            <person name="Berka R.M."/>
        </authorList>
    </citation>
    <scope>NUCLEOTIDE SEQUENCE [LARGE SCALE GENOMIC DNA]</scope>
    <source>
        <strain>ATCC 14580 / DSM 13 / JCM 2505 / CCUG 7422 / NBRC 12200 / NCIMB 9375 / NCTC 10341 / NRRL NRS-1264 / Gibson 46</strain>
    </source>
</reference>
<proteinExistence type="inferred from homology"/>
<name>RL18_BACLD</name>
<protein>
    <recommendedName>
        <fullName evidence="1">Large ribosomal subunit protein uL18</fullName>
    </recommendedName>
    <alternativeName>
        <fullName evidence="2">50S ribosomal protein L18</fullName>
    </alternativeName>
</protein>
<evidence type="ECO:0000255" key="1">
    <source>
        <dbReference type="HAMAP-Rule" id="MF_01337"/>
    </source>
</evidence>
<evidence type="ECO:0000305" key="2"/>
<sequence>MITKTSKNAARLKRHARVRAKLSGTPERPRLNVFRSNKHIYAQVIDDVNGVTLVSASTLDKDFNAENGSDTAAAAKVGELVAKRASEKGITNVVFDRGGYLYHGRVKALADAAREAGLEF</sequence>
<gene>
    <name evidence="1" type="primary">rplR</name>
    <name type="ordered locus">BLi00149</name>
    <name type="ordered locus">BL01035</name>
</gene>
<dbReference type="EMBL" id="AE017333">
    <property type="protein sequence ID" value="AAU39123.1"/>
    <property type="molecule type" value="Genomic_DNA"/>
</dbReference>
<dbReference type="EMBL" id="CP000002">
    <property type="protein sequence ID" value="AAU21778.2"/>
    <property type="molecule type" value="Genomic_DNA"/>
</dbReference>
<dbReference type="RefSeq" id="WP_003178358.1">
    <property type="nucleotide sequence ID" value="NC_006322.1"/>
</dbReference>
<dbReference type="SMR" id="Q65P91"/>
<dbReference type="STRING" id="279010.BL01035"/>
<dbReference type="GeneID" id="92858887"/>
<dbReference type="KEGG" id="bld:BLi00149"/>
<dbReference type="KEGG" id="bli:BL01035"/>
<dbReference type="eggNOG" id="COG0256">
    <property type="taxonomic scope" value="Bacteria"/>
</dbReference>
<dbReference type="HOGENOM" id="CLU_098841_0_1_9"/>
<dbReference type="Proteomes" id="UP000000606">
    <property type="component" value="Chromosome"/>
</dbReference>
<dbReference type="GO" id="GO:0022625">
    <property type="term" value="C:cytosolic large ribosomal subunit"/>
    <property type="evidence" value="ECO:0007669"/>
    <property type="project" value="TreeGrafter"/>
</dbReference>
<dbReference type="GO" id="GO:0008097">
    <property type="term" value="F:5S rRNA binding"/>
    <property type="evidence" value="ECO:0007669"/>
    <property type="project" value="TreeGrafter"/>
</dbReference>
<dbReference type="GO" id="GO:0003735">
    <property type="term" value="F:structural constituent of ribosome"/>
    <property type="evidence" value="ECO:0007669"/>
    <property type="project" value="InterPro"/>
</dbReference>
<dbReference type="GO" id="GO:0006412">
    <property type="term" value="P:translation"/>
    <property type="evidence" value="ECO:0007669"/>
    <property type="project" value="UniProtKB-UniRule"/>
</dbReference>
<dbReference type="CDD" id="cd00432">
    <property type="entry name" value="Ribosomal_L18_L5e"/>
    <property type="match status" value="1"/>
</dbReference>
<dbReference type="FunFam" id="3.30.420.100:FF:000001">
    <property type="entry name" value="50S ribosomal protein L18"/>
    <property type="match status" value="1"/>
</dbReference>
<dbReference type="Gene3D" id="3.30.420.100">
    <property type="match status" value="1"/>
</dbReference>
<dbReference type="HAMAP" id="MF_01337_B">
    <property type="entry name" value="Ribosomal_uL18_B"/>
    <property type="match status" value="1"/>
</dbReference>
<dbReference type="InterPro" id="IPR004389">
    <property type="entry name" value="Ribosomal_uL18_bac-type"/>
</dbReference>
<dbReference type="InterPro" id="IPR005484">
    <property type="entry name" value="Ribosomal_uL18_bac/euk"/>
</dbReference>
<dbReference type="NCBIfam" id="TIGR00060">
    <property type="entry name" value="L18_bact"/>
    <property type="match status" value="1"/>
</dbReference>
<dbReference type="PANTHER" id="PTHR12899">
    <property type="entry name" value="39S RIBOSOMAL PROTEIN L18, MITOCHONDRIAL"/>
    <property type="match status" value="1"/>
</dbReference>
<dbReference type="PANTHER" id="PTHR12899:SF3">
    <property type="entry name" value="LARGE RIBOSOMAL SUBUNIT PROTEIN UL18M"/>
    <property type="match status" value="1"/>
</dbReference>
<dbReference type="Pfam" id="PF00861">
    <property type="entry name" value="Ribosomal_L18p"/>
    <property type="match status" value="1"/>
</dbReference>
<dbReference type="SUPFAM" id="SSF53137">
    <property type="entry name" value="Translational machinery components"/>
    <property type="match status" value="1"/>
</dbReference>
<keyword id="KW-1185">Reference proteome</keyword>
<keyword id="KW-0687">Ribonucleoprotein</keyword>
<keyword id="KW-0689">Ribosomal protein</keyword>
<keyword id="KW-0694">RNA-binding</keyword>
<keyword id="KW-0699">rRNA-binding</keyword>